<accession>Q962A2</accession>
<dbReference type="EMBL" id="AY039808">
    <property type="protein sequence ID" value="AAK71499.1"/>
    <property type="molecule type" value="mRNA"/>
</dbReference>
<dbReference type="SMR" id="Q962A2"/>
<dbReference type="STRING" id="6293.Q962A2"/>
<dbReference type="WBParaSite" id="mrna-Wban_02672">
    <property type="protein sequence ID" value="mrna-Wban_02672"/>
    <property type="gene ID" value="Wban_02672"/>
</dbReference>
<dbReference type="Proteomes" id="UP000093561">
    <property type="component" value="Unassembled WGS sequence"/>
</dbReference>
<dbReference type="GO" id="GO:0005737">
    <property type="term" value="C:cytoplasm"/>
    <property type="evidence" value="ECO:0007669"/>
    <property type="project" value="UniProtKB-SubCell"/>
</dbReference>
<dbReference type="GO" id="GO:0005509">
    <property type="term" value="F:calcium ion binding"/>
    <property type="evidence" value="ECO:0007669"/>
    <property type="project" value="TreeGrafter"/>
</dbReference>
<dbReference type="FunFam" id="2.170.150.10:FF:000010">
    <property type="entry name" value="Translationally-controlled tumor protein homolog"/>
    <property type="match status" value="1"/>
</dbReference>
<dbReference type="Gene3D" id="2.170.150.10">
    <property type="entry name" value="Metal Binding Protein, Guanine Nucleotide Exchange Factor, Chain A"/>
    <property type="match status" value="1"/>
</dbReference>
<dbReference type="InterPro" id="IPR011057">
    <property type="entry name" value="Mss4-like_sf"/>
</dbReference>
<dbReference type="InterPro" id="IPR011323">
    <property type="entry name" value="Mss4/transl-control_tumour"/>
</dbReference>
<dbReference type="InterPro" id="IPR034737">
    <property type="entry name" value="TCTP"/>
</dbReference>
<dbReference type="InterPro" id="IPR018103">
    <property type="entry name" value="Translation_control_tumour_CS"/>
</dbReference>
<dbReference type="InterPro" id="IPR018105">
    <property type="entry name" value="Translational_control_tumour_p"/>
</dbReference>
<dbReference type="PANTHER" id="PTHR11991">
    <property type="entry name" value="TRANSLATIONALLY CONTROLLED TUMOR PROTEIN-RELATED"/>
    <property type="match status" value="1"/>
</dbReference>
<dbReference type="PANTHER" id="PTHR11991:SF0">
    <property type="entry name" value="TRANSLATIONALLY-CONTROLLED TUMOR PROTEIN"/>
    <property type="match status" value="1"/>
</dbReference>
<dbReference type="Pfam" id="PF00838">
    <property type="entry name" value="TCTP"/>
    <property type="match status" value="1"/>
</dbReference>
<dbReference type="PRINTS" id="PR01653">
    <property type="entry name" value="TCTPROTEIN"/>
</dbReference>
<dbReference type="SUPFAM" id="SSF51316">
    <property type="entry name" value="Mss4-like"/>
    <property type="match status" value="1"/>
</dbReference>
<dbReference type="PROSITE" id="PS01002">
    <property type="entry name" value="TCTP_1"/>
    <property type="match status" value="1"/>
</dbReference>
<dbReference type="PROSITE" id="PS01003">
    <property type="entry name" value="TCTP_2"/>
    <property type="match status" value="1"/>
</dbReference>
<dbReference type="PROSITE" id="PS51797">
    <property type="entry name" value="TCTP_3"/>
    <property type="match status" value="1"/>
</dbReference>
<name>TCTP_WUCBA</name>
<proteinExistence type="evidence at transcript level"/>
<comment type="function">
    <text evidence="1">Involved in calcium binding and microtubule stabilization.</text>
</comment>
<comment type="subcellular location">
    <subcellularLocation>
        <location evidence="1">Cytoplasm</location>
    </subcellularLocation>
</comment>
<comment type="similarity">
    <text evidence="2">Belongs to the TCTP family.</text>
</comment>
<feature type="chain" id="PRO_0000211282" description="Translationally-controlled tumor protein homolog">
    <location>
        <begin position="1"/>
        <end position="181"/>
    </location>
</feature>
<feature type="domain" description="TCTP" evidence="2">
    <location>
        <begin position="1"/>
        <end position="181"/>
    </location>
</feature>
<organism>
    <name type="scientific">Wuchereria bancrofti</name>
    <dbReference type="NCBI Taxonomy" id="6293"/>
    <lineage>
        <taxon>Eukaryota</taxon>
        <taxon>Metazoa</taxon>
        <taxon>Ecdysozoa</taxon>
        <taxon>Nematoda</taxon>
        <taxon>Chromadorea</taxon>
        <taxon>Rhabditida</taxon>
        <taxon>Spirurina</taxon>
        <taxon>Spiruromorpha</taxon>
        <taxon>Filarioidea</taxon>
        <taxon>Onchocercidae</taxon>
        <taxon>Wuchereria</taxon>
    </lineage>
</organism>
<evidence type="ECO:0000250" key="1"/>
<evidence type="ECO:0000255" key="2">
    <source>
        <dbReference type="PROSITE-ProRule" id="PRU01133"/>
    </source>
</evidence>
<reference key="1">
    <citation type="submission" date="2001-06" db="EMBL/GenBank/DDBJ databases">
        <title>Wuchereria bancrofti translationally controlled tumor protein homolog.</title>
        <authorList>
            <person name="Gnanasekar M."/>
            <person name="Rao K."/>
            <person name="Muthukmaran G."/>
            <person name="Narayanan R."/>
            <person name="Scott A.L."/>
            <person name="Ramaswamy K."/>
            <person name="Kaliraj P."/>
        </authorList>
    </citation>
    <scope>NUCLEOTIDE SEQUENCE [MRNA]</scope>
</reference>
<protein>
    <recommendedName>
        <fullName>Translationally-controlled tumor protein homolog</fullName>
        <shortName>TCTP</shortName>
    </recommendedName>
</protein>
<keyword id="KW-0106">Calcium</keyword>
<keyword id="KW-0963">Cytoplasm</keyword>
<sequence length="181" mass="20797">MLIFKDAFTDDELASDSFPMKLVDGLIWEFKGRQVVRREGEIQLAGANPSTEGEDGDEGSEECVERGIDFVLNHRLQEMNCYEDLATFKSYCKSFMKKVVELMQKNGKSEAEISEFKRKIQAWVVSLLSKDRFKQLQFFIGERMAEGQGEGQVAVVEYRDEEEGEVPYLMLVKEALVEEKQ</sequence>